<name>MYH4_HUMAN</name>
<protein>
    <recommendedName>
        <fullName>Myosin-4</fullName>
    </recommendedName>
    <alternativeName>
        <fullName>Myosin heavy chain 2b</fullName>
        <shortName>MyHC-2b</shortName>
    </alternativeName>
    <alternativeName>
        <fullName>Myosin heavy chain 4</fullName>
    </alternativeName>
    <alternativeName>
        <fullName>Myosin heavy chain IIb</fullName>
        <shortName>MyHC-IIb</shortName>
    </alternativeName>
    <alternativeName>
        <fullName>Myosin heavy chain, skeletal muscle, fetal</fullName>
    </alternativeName>
</protein>
<accession>Q9Y623</accession>
<reference key="1">
    <citation type="journal article" date="1999" name="J. Mol. Biol.">
        <title>Comparative sequence analysis of the complete human sarcomeric myosin heavy chain family: implications for functional diversity.</title>
        <authorList>
            <person name="Weiss A."/>
            <person name="Schiaffino S."/>
            <person name="Leinwand L.A."/>
        </authorList>
    </citation>
    <scope>NUCLEOTIDE SEQUENCE [MRNA]</scope>
    <scope>VARIANTS MET-1106; LYS-1209; GLY-1802 AND GLU-1911</scope>
    <source>
        <tissue>Skeletal muscle</tissue>
    </source>
</reference>
<reference key="2">
    <citation type="journal article" date="2006" name="Nature">
        <title>DNA sequence of human chromosome 17 and analysis of rearrangement in the human lineage.</title>
        <authorList>
            <person name="Zody M.C."/>
            <person name="Garber M."/>
            <person name="Adams D.J."/>
            <person name="Sharpe T."/>
            <person name="Harrow J."/>
            <person name="Lupski J.R."/>
            <person name="Nicholson C."/>
            <person name="Searle S.M."/>
            <person name="Wilming L."/>
            <person name="Young S.K."/>
            <person name="Abouelleil A."/>
            <person name="Allen N.R."/>
            <person name="Bi W."/>
            <person name="Bloom T."/>
            <person name="Borowsky M.L."/>
            <person name="Bugalter B.E."/>
            <person name="Butler J."/>
            <person name="Chang J.L."/>
            <person name="Chen C.-K."/>
            <person name="Cook A."/>
            <person name="Corum B."/>
            <person name="Cuomo C.A."/>
            <person name="de Jong P.J."/>
            <person name="DeCaprio D."/>
            <person name="Dewar K."/>
            <person name="FitzGerald M."/>
            <person name="Gilbert J."/>
            <person name="Gibson R."/>
            <person name="Gnerre S."/>
            <person name="Goldstein S."/>
            <person name="Grafham D.V."/>
            <person name="Grocock R."/>
            <person name="Hafez N."/>
            <person name="Hagopian D.S."/>
            <person name="Hart E."/>
            <person name="Norman C.H."/>
            <person name="Humphray S."/>
            <person name="Jaffe D.B."/>
            <person name="Jones M."/>
            <person name="Kamal M."/>
            <person name="Khodiyar V.K."/>
            <person name="LaButti K."/>
            <person name="Laird G."/>
            <person name="Lehoczky J."/>
            <person name="Liu X."/>
            <person name="Lokyitsang T."/>
            <person name="Loveland J."/>
            <person name="Lui A."/>
            <person name="Macdonald P."/>
            <person name="Major J.E."/>
            <person name="Matthews L."/>
            <person name="Mauceli E."/>
            <person name="McCarroll S.A."/>
            <person name="Mihalev A.H."/>
            <person name="Mudge J."/>
            <person name="Nguyen C."/>
            <person name="Nicol R."/>
            <person name="O'Leary S.B."/>
            <person name="Osoegawa K."/>
            <person name="Schwartz D.C."/>
            <person name="Shaw-Smith C."/>
            <person name="Stankiewicz P."/>
            <person name="Steward C."/>
            <person name="Swarbreck D."/>
            <person name="Venkataraman V."/>
            <person name="Whittaker C.A."/>
            <person name="Yang X."/>
            <person name="Zimmer A.R."/>
            <person name="Bradley A."/>
            <person name="Hubbard T."/>
            <person name="Birren B.W."/>
            <person name="Rogers J."/>
            <person name="Lander E.S."/>
            <person name="Nusbaum C."/>
        </authorList>
    </citation>
    <scope>NUCLEOTIDE SEQUENCE [LARGE SCALE GENOMIC DNA]</scope>
</reference>
<dbReference type="EMBL" id="AF111783">
    <property type="protein sequence ID" value="AAD29949.1"/>
    <property type="molecule type" value="mRNA"/>
</dbReference>
<dbReference type="EMBL" id="AC005323">
    <property type="status" value="NOT_ANNOTATED_CDS"/>
    <property type="molecule type" value="Genomic_DNA"/>
</dbReference>
<dbReference type="CCDS" id="CCDS11154.1"/>
<dbReference type="RefSeq" id="NP_060003.2">
    <property type="nucleotide sequence ID" value="NM_017533.2"/>
</dbReference>
<dbReference type="RefSeq" id="XP_016880165.1">
    <property type="nucleotide sequence ID" value="XM_017024676.2"/>
</dbReference>
<dbReference type="SMR" id="Q9Y623"/>
<dbReference type="BioGRID" id="110707">
    <property type="interactions" value="90"/>
</dbReference>
<dbReference type="FunCoup" id="Q9Y623">
    <property type="interactions" value="395"/>
</dbReference>
<dbReference type="IntAct" id="Q9Y623">
    <property type="interactions" value="53"/>
</dbReference>
<dbReference type="MINT" id="Q9Y623"/>
<dbReference type="STRING" id="9606.ENSP00000255381"/>
<dbReference type="GlyGen" id="Q9Y623">
    <property type="glycosylation" value="1 site, 1 O-linked glycan (1 site)"/>
</dbReference>
<dbReference type="iPTMnet" id="Q9Y623"/>
<dbReference type="PhosphoSitePlus" id="Q9Y623"/>
<dbReference type="BioMuta" id="MYH4"/>
<dbReference type="DMDM" id="224471840"/>
<dbReference type="jPOST" id="Q9Y623"/>
<dbReference type="MassIVE" id="Q9Y623"/>
<dbReference type="PaxDb" id="9606-ENSP00000255381"/>
<dbReference type="PeptideAtlas" id="Q9Y623"/>
<dbReference type="ProteomicsDB" id="86589"/>
<dbReference type="Pumba" id="Q9Y623"/>
<dbReference type="Antibodypedia" id="62478">
    <property type="antibodies" value="131 antibodies from 24 providers"/>
</dbReference>
<dbReference type="DNASU" id="4622"/>
<dbReference type="Ensembl" id="ENST00000255381.2">
    <property type="protein sequence ID" value="ENSP00000255381.2"/>
    <property type="gene ID" value="ENSG00000264424.1"/>
</dbReference>
<dbReference type="GeneID" id="4622"/>
<dbReference type="KEGG" id="hsa:4622"/>
<dbReference type="MANE-Select" id="ENST00000255381.2">
    <property type="protein sequence ID" value="ENSP00000255381.2"/>
    <property type="RefSeq nucleotide sequence ID" value="NM_017533.2"/>
    <property type="RefSeq protein sequence ID" value="NP_060003.2"/>
</dbReference>
<dbReference type="UCSC" id="uc002gmn.4">
    <property type="organism name" value="human"/>
</dbReference>
<dbReference type="AGR" id="HGNC:7574"/>
<dbReference type="CTD" id="4622"/>
<dbReference type="DisGeNET" id="4622"/>
<dbReference type="GeneCards" id="MYH4"/>
<dbReference type="HGNC" id="HGNC:7574">
    <property type="gene designation" value="MYH4"/>
</dbReference>
<dbReference type="HPA" id="ENSG00000264424">
    <property type="expression patterns" value="Tissue enriched (skeletal)"/>
</dbReference>
<dbReference type="MIM" id="160742">
    <property type="type" value="gene"/>
</dbReference>
<dbReference type="neXtProt" id="NX_Q9Y623"/>
<dbReference type="OpenTargets" id="ENSG00000264424"/>
<dbReference type="PharmGKB" id="PA31371"/>
<dbReference type="VEuPathDB" id="HostDB:ENSG00000264424"/>
<dbReference type="eggNOG" id="KOG0161">
    <property type="taxonomic scope" value="Eukaryota"/>
</dbReference>
<dbReference type="GeneTree" id="ENSGT00940000163211"/>
<dbReference type="HOGENOM" id="CLU_000192_8_0_1"/>
<dbReference type="InParanoid" id="Q9Y623"/>
<dbReference type="OMA" id="APTGKMQ"/>
<dbReference type="OrthoDB" id="312459at2759"/>
<dbReference type="PAN-GO" id="Q9Y623">
    <property type="GO annotations" value="6 GO annotations based on evolutionary models"/>
</dbReference>
<dbReference type="PhylomeDB" id="Q9Y623"/>
<dbReference type="TreeFam" id="TF314375"/>
<dbReference type="PathwayCommons" id="Q9Y623"/>
<dbReference type="SignaLink" id="Q9Y623"/>
<dbReference type="BioGRID-ORCS" id="4622">
    <property type="hits" value="23 hits in 1147 CRISPR screens"/>
</dbReference>
<dbReference type="GeneWiki" id="MYH4"/>
<dbReference type="GenomeRNAi" id="4622"/>
<dbReference type="Pharos" id="Q9Y623">
    <property type="development level" value="Tbio"/>
</dbReference>
<dbReference type="PRO" id="PR:Q9Y623"/>
<dbReference type="Proteomes" id="UP000005640">
    <property type="component" value="Chromosome 17"/>
</dbReference>
<dbReference type="RNAct" id="Q9Y623">
    <property type="molecule type" value="protein"/>
</dbReference>
<dbReference type="Bgee" id="ENSG00000264424">
    <property type="expression patterns" value="Expressed in skeletal muscle tissue of rectus abdominis and 22 other cell types or tissues"/>
</dbReference>
<dbReference type="GO" id="GO:0005737">
    <property type="term" value="C:cytoplasm"/>
    <property type="evidence" value="ECO:0000318"/>
    <property type="project" value="GO_Central"/>
</dbReference>
<dbReference type="GO" id="GO:0005859">
    <property type="term" value="C:muscle myosin complex"/>
    <property type="evidence" value="ECO:0000303"/>
    <property type="project" value="BHF-UCL"/>
</dbReference>
<dbReference type="GO" id="GO:0030016">
    <property type="term" value="C:myofibril"/>
    <property type="evidence" value="ECO:0000314"/>
    <property type="project" value="BHF-UCL"/>
</dbReference>
<dbReference type="GO" id="GO:0032982">
    <property type="term" value="C:myosin filament"/>
    <property type="evidence" value="ECO:0000318"/>
    <property type="project" value="GO_Central"/>
</dbReference>
<dbReference type="GO" id="GO:0016460">
    <property type="term" value="C:myosin II complex"/>
    <property type="evidence" value="ECO:0000318"/>
    <property type="project" value="GO_Central"/>
</dbReference>
<dbReference type="GO" id="GO:0030017">
    <property type="term" value="C:sarcomere"/>
    <property type="evidence" value="ECO:0000303"/>
    <property type="project" value="BHF-UCL"/>
</dbReference>
<dbReference type="GO" id="GO:0051015">
    <property type="term" value="F:actin filament binding"/>
    <property type="evidence" value="ECO:0000318"/>
    <property type="project" value="GO_Central"/>
</dbReference>
<dbReference type="GO" id="GO:0005524">
    <property type="term" value="F:ATP binding"/>
    <property type="evidence" value="ECO:0007669"/>
    <property type="project" value="UniProtKB-KW"/>
</dbReference>
<dbReference type="GO" id="GO:0016887">
    <property type="term" value="F:ATP hydrolysis activity"/>
    <property type="evidence" value="ECO:0000303"/>
    <property type="project" value="BHF-UCL"/>
</dbReference>
<dbReference type="GO" id="GO:0005516">
    <property type="term" value="F:calmodulin binding"/>
    <property type="evidence" value="ECO:0007669"/>
    <property type="project" value="UniProtKB-KW"/>
</dbReference>
<dbReference type="GO" id="GO:0003725">
    <property type="term" value="F:double-stranded RNA binding"/>
    <property type="evidence" value="ECO:0000314"/>
    <property type="project" value="MGI"/>
</dbReference>
<dbReference type="GO" id="GO:0000146">
    <property type="term" value="F:microfilament motor activity"/>
    <property type="evidence" value="ECO:0000318"/>
    <property type="project" value="GO_Central"/>
</dbReference>
<dbReference type="GO" id="GO:0030048">
    <property type="term" value="P:actin filament-based movement"/>
    <property type="evidence" value="ECO:0000303"/>
    <property type="project" value="UniProtKB"/>
</dbReference>
<dbReference type="GO" id="GO:0046034">
    <property type="term" value="P:ATP metabolic process"/>
    <property type="evidence" value="ECO:0000303"/>
    <property type="project" value="BHF-UCL"/>
</dbReference>
<dbReference type="GO" id="GO:0006936">
    <property type="term" value="P:muscle contraction"/>
    <property type="evidence" value="ECO:0000314"/>
    <property type="project" value="BHF-UCL"/>
</dbReference>
<dbReference type="GO" id="GO:0030049">
    <property type="term" value="P:muscle filament sliding"/>
    <property type="evidence" value="ECO:0000303"/>
    <property type="project" value="BHF-UCL"/>
</dbReference>
<dbReference type="CDD" id="cd14915">
    <property type="entry name" value="MYSc_Myh4"/>
    <property type="match status" value="1"/>
</dbReference>
<dbReference type="FunFam" id="1.10.10.820:FF:000001">
    <property type="entry name" value="Myosin heavy chain"/>
    <property type="match status" value="1"/>
</dbReference>
<dbReference type="FunFam" id="1.20.5.340:FF:000002">
    <property type="entry name" value="Myosin heavy chain"/>
    <property type="match status" value="1"/>
</dbReference>
<dbReference type="FunFam" id="1.20.5.340:FF:000003">
    <property type="entry name" value="Myosin heavy chain"/>
    <property type="match status" value="1"/>
</dbReference>
<dbReference type="FunFam" id="1.20.5.340:FF:000004">
    <property type="entry name" value="Myosin heavy chain"/>
    <property type="match status" value="1"/>
</dbReference>
<dbReference type="FunFam" id="1.20.5.340:FF:000006">
    <property type="entry name" value="Myosin heavy chain"/>
    <property type="match status" value="1"/>
</dbReference>
<dbReference type="FunFam" id="1.20.5.340:FF:000013">
    <property type="entry name" value="Myosin heavy chain"/>
    <property type="match status" value="1"/>
</dbReference>
<dbReference type="FunFam" id="1.20.5.370:FF:000001">
    <property type="entry name" value="Myosin heavy chain"/>
    <property type="match status" value="1"/>
</dbReference>
<dbReference type="FunFam" id="1.20.5.370:FF:000002">
    <property type="entry name" value="Myosin heavy chain"/>
    <property type="match status" value="1"/>
</dbReference>
<dbReference type="FunFam" id="1.20.5.370:FF:000003">
    <property type="entry name" value="Myosin heavy chain"/>
    <property type="match status" value="1"/>
</dbReference>
<dbReference type="FunFam" id="1.20.5.370:FF:000007">
    <property type="entry name" value="Myosin heavy chain"/>
    <property type="match status" value="1"/>
</dbReference>
<dbReference type="FunFam" id="1.20.5.370:FF:000008">
    <property type="entry name" value="Myosin heavy chain"/>
    <property type="match status" value="1"/>
</dbReference>
<dbReference type="FunFam" id="1.20.5.4820:FF:000001">
    <property type="entry name" value="Myosin heavy chain"/>
    <property type="match status" value="1"/>
</dbReference>
<dbReference type="FunFam" id="1.20.58.530:FF:000001">
    <property type="entry name" value="Myosin heavy chain"/>
    <property type="match status" value="1"/>
</dbReference>
<dbReference type="FunFam" id="2.30.30.360:FF:000001">
    <property type="entry name" value="Myosin heavy chain"/>
    <property type="match status" value="1"/>
</dbReference>
<dbReference type="FunFam" id="3.40.850.10:FF:000024">
    <property type="entry name" value="Myosin heavy chain, isoform J"/>
    <property type="match status" value="1"/>
</dbReference>
<dbReference type="FunFam" id="1.20.120.720:FF:000001">
    <property type="entry name" value="Myosin heavy chain, muscle"/>
    <property type="match status" value="1"/>
</dbReference>
<dbReference type="Gene3D" id="1.10.10.820">
    <property type="match status" value="1"/>
</dbReference>
<dbReference type="Gene3D" id="1.20.5.340">
    <property type="match status" value="5"/>
</dbReference>
<dbReference type="Gene3D" id="1.20.5.370">
    <property type="match status" value="4"/>
</dbReference>
<dbReference type="Gene3D" id="1.20.5.4820">
    <property type="match status" value="1"/>
</dbReference>
<dbReference type="Gene3D" id="1.20.58.530">
    <property type="match status" value="1"/>
</dbReference>
<dbReference type="Gene3D" id="6.10.250.2420">
    <property type="match status" value="1"/>
</dbReference>
<dbReference type="Gene3D" id="3.40.850.10">
    <property type="entry name" value="Kinesin motor domain"/>
    <property type="match status" value="1"/>
</dbReference>
<dbReference type="Gene3D" id="2.30.30.360">
    <property type="entry name" value="Myosin S1 fragment, N-terminal"/>
    <property type="match status" value="1"/>
</dbReference>
<dbReference type="Gene3D" id="1.20.120.720">
    <property type="entry name" value="Myosin VI head, motor domain, U50 subdomain"/>
    <property type="match status" value="1"/>
</dbReference>
<dbReference type="InterPro" id="IPR036961">
    <property type="entry name" value="Kinesin_motor_dom_sf"/>
</dbReference>
<dbReference type="InterPro" id="IPR001609">
    <property type="entry name" value="Myosin_head_motor_dom-like"/>
</dbReference>
<dbReference type="InterPro" id="IPR004009">
    <property type="entry name" value="Myosin_N"/>
</dbReference>
<dbReference type="InterPro" id="IPR008989">
    <property type="entry name" value="Myosin_S1_N"/>
</dbReference>
<dbReference type="InterPro" id="IPR002928">
    <property type="entry name" value="Myosin_tail"/>
</dbReference>
<dbReference type="InterPro" id="IPR027417">
    <property type="entry name" value="P-loop_NTPase"/>
</dbReference>
<dbReference type="InterPro" id="IPR014751">
    <property type="entry name" value="XRCC4-like_C"/>
</dbReference>
<dbReference type="PANTHER" id="PTHR45615">
    <property type="entry name" value="MYOSIN HEAVY CHAIN, NON-MUSCLE"/>
    <property type="match status" value="1"/>
</dbReference>
<dbReference type="PANTHER" id="PTHR45615:SF79">
    <property type="entry name" value="MYOSIN-4"/>
    <property type="match status" value="1"/>
</dbReference>
<dbReference type="Pfam" id="PF00063">
    <property type="entry name" value="Myosin_head"/>
    <property type="match status" value="1"/>
</dbReference>
<dbReference type="Pfam" id="PF02736">
    <property type="entry name" value="Myosin_N"/>
    <property type="match status" value="1"/>
</dbReference>
<dbReference type="Pfam" id="PF01576">
    <property type="entry name" value="Myosin_tail_1"/>
    <property type="match status" value="1"/>
</dbReference>
<dbReference type="PRINTS" id="PR00193">
    <property type="entry name" value="MYOSINHEAVY"/>
</dbReference>
<dbReference type="SMART" id="SM00242">
    <property type="entry name" value="MYSc"/>
    <property type="match status" value="1"/>
</dbReference>
<dbReference type="SUPFAM" id="SSF90257">
    <property type="entry name" value="Myosin rod fragments"/>
    <property type="match status" value="5"/>
</dbReference>
<dbReference type="SUPFAM" id="SSF52540">
    <property type="entry name" value="P-loop containing nucleoside triphosphate hydrolases"/>
    <property type="match status" value="1"/>
</dbReference>
<dbReference type="PROSITE" id="PS50096">
    <property type="entry name" value="IQ"/>
    <property type="match status" value="1"/>
</dbReference>
<dbReference type="PROSITE" id="PS51456">
    <property type="entry name" value="MYOSIN_MOTOR"/>
    <property type="match status" value="1"/>
</dbReference>
<dbReference type="PROSITE" id="PS51844">
    <property type="entry name" value="SH3_LIKE"/>
    <property type="match status" value="1"/>
</dbReference>
<proteinExistence type="evidence at protein level"/>
<comment type="function">
    <text>Muscle contraction.</text>
</comment>
<comment type="subunit">
    <text>Muscle myosin is a hexameric protein that consists of 2 heavy chain subunits (MHC), 2 alkali light chain subunits (MLC) and 2 regulatory light chain subunits (MLC-2).</text>
</comment>
<comment type="subcellular location">
    <subcellularLocation>
        <location>Cytoplasm</location>
        <location>Myofibril</location>
    </subcellularLocation>
    <text>Thick filaments of the myofibrils.</text>
</comment>
<comment type="domain">
    <text>The rodlike tail sequence is highly repetitive, showing cycles of a 28-residue repeat pattern composed of 4 heptapeptides, characteristic for alpha-helical coiled coils.</text>
</comment>
<comment type="domain">
    <text evidence="9">Limited proteolysis of myosin heavy chain produces 1 light meromyosin (LMM) and 1 heavy meromyosin (HMM). HMM can be further cleaved into 2 globular subfragments (S1) and 1 rod-shaped subfragment (S2).</text>
</comment>
<comment type="similarity">
    <text evidence="9">Belongs to the TRAFAC class myosin-kinesin ATPase superfamily. Myosin family.</text>
</comment>
<comment type="caution">
    <text evidence="9">Represents a conventional myosin. This protein should not be confused with the unconventional myosin-4 (MYO4).</text>
</comment>
<evidence type="ECO:0000250" key="1"/>
<evidence type="ECO:0000250" key="2">
    <source>
        <dbReference type="UniProtKB" id="Q28641"/>
    </source>
</evidence>
<evidence type="ECO:0000250" key="3">
    <source>
        <dbReference type="UniProtKB" id="Q29RW1"/>
    </source>
</evidence>
<evidence type="ECO:0000255" key="4"/>
<evidence type="ECO:0000255" key="5">
    <source>
        <dbReference type="PROSITE-ProRule" id="PRU00116"/>
    </source>
</evidence>
<evidence type="ECO:0000255" key="6">
    <source>
        <dbReference type="PROSITE-ProRule" id="PRU00782"/>
    </source>
</evidence>
<evidence type="ECO:0000255" key="7">
    <source>
        <dbReference type="PROSITE-ProRule" id="PRU01190"/>
    </source>
</evidence>
<evidence type="ECO:0000269" key="8">
    <source>
    </source>
</evidence>
<evidence type="ECO:0000305" key="9"/>
<organism>
    <name type="scientific">Homo sapiens</name>
    <name type="common">Human</name>
    <dbReference type="NCBI Taxonomy" id="9606"/>
    <lineage>
        <taxon>Eukaryota</taxon>
        <taxon>Metazoa</taxon>
        <taxon>Chordata</taxon>
        <taxon>Craniata</taxon>
        <taxon>Vertebrata</taxon>
        <taxon>Euteleostomi</taxon>
        <taxon>Mammalia</taxon>
        <taxon>Eutheria</taxon>
        <taxon>Euarchontoglires</taxon>
        <taxon>Primates</taxon>
        <taxon>Haplorrhini</taxon>
        <taxon>Catarrhini</taxon>
        <taxon>Hominidae</taxon>
        <taxon>Homo</taxon>
    </lineage>
</organism>
<feature type="chain" id="PRO_0000123398" description="Myosin-4">
    <location>
        <begin position="1"/>
        <end position="1939"/>
    </location>
</feature>
<feature type="domain" description="Myosin N-terminal SH3-like" evidence="7">
    <location>
        <begin position="33"/>
        <end position="82"/>
    </location>
</feature>
<feature type="domain" description="Myosin motor" evidence="6">
    <location>
        <begin position="86"/>
        <end position="782"/>
    </location>
</feature>
<feature type="domain" description="IQ" evidence="5">
    <location>
        <begin position="785"/>
        <end position="814"/>
    </location>
</feature>
<feature type="region of interest" description="Actin-binding" evidence="1">
    <location>
        <begin position="659"/>
        <end position="681"/>
    </location>
</feature>
<feature type="region of interest" description="Actin-binding" evidence="1">
    <location>
        <begin position="761"/>
        <end position="775"/>
    </location>
</feature>
<feature type="coiled-coil region" evidence="4">
    <location>
        <begin position="843"/>
        <end position="1939"/>
    </location>
</feature>
<feature type="binding site" evidence="4">
    <location>
        <begin position="179"/>
        <end position="186"/>
    </location>
    <ligand>
        <name>ATP</name>
        <dbReference type="ChEBI" id="CHEBI:30616"/>
    </ligand>
</feature>
<feature type="modified residue" description="Phosphothreonine" evidence="3">
    <location>
        <position position="64"/>
    </location>
</feature>
<feature type="modified residue" description="Phosphothreonine" evidence="3">
    <location>
        <position position="69"/>
    </location>
</feature>
<feature type="modified residue" description="Phosphoserine" evidence="3">
    <location>
        <position position="79"/>
    </location>
</feature>
<feature type="modified residue" description="N6,N6,N6-trimethyllysine" evidence="4">
    <location>
        <position position="130"/>
    </location>
</feature>
<feature type="modified residue" description="Phosphotyrosine" evidence="3">
    <location>
        <position position="389"/>
    </location>
</feature>
<feature type="modified residue" description="Phosphothreonine" evidence="3">
    <location>
        <position position="391"/>
    </location>
</feature>
<feature type="modified residue" description="Phosphoserine" evidence="3">
    <location>
        <position position="392"/>
    </location>
</feature>
<feature type="modified residue" description="Phosphothreonine" evidence="3">
    <location>
        <position position="419"/>
    </location>
</feature>
<feature type="modified residue" description="Phosphotyrosine" evidence="3">
    <location>
        <position position="424"/>
    </location>
</feature>
<feature type="modified residue" description="Phosphoserine" evidence="3">
    <location>
        <position position="625"/>
    </location>
</feature>
<feature type="modified residue" description="Pros-methylhistidine" evidence="2">
    <location>
        <position position="757"/>
    </location>
</feature>
<feature type="modified residue" description="Phosphothreonine" evidence="3">
    <location>
        <position position="776"/>
    </location>
</feature>
<feature type="modified residue" description="Phosphoserine" evidence="3">
    <location>
        <position position="1092"/>
    </location>
</feature>
<feature type="modified residue" description="Phosphoserine" evidence="3">
    <location>
        <position position="1162"/>
    </location>
</feature>
<feature type="modified residue" description="Phosphoserine" evidence="3">
    <location>
        <position position="1237"/>
    </location>
</feature>
<feature type="modified residue" description="Phosphothreonine" evidence="3">
    <location>
        <position position="1241"/>
    </location>
</feature>
<feature type="modified residue" description="Phosphoserine" evidence="3">
    <location>
        <position position="1243"/>
    </location>
</feature>
<feature type="modified residue" description="Phosphothreonine" evidence="3">
    <location>
        <position position="1255"/>
    </location>
</feature>
<feature type="modified residue" description="Phosphoserine" evidence="3">
    <location>
        <position position="1261"/>
    </location>
</feature>
<feature type="modified residue" description="Phosphothreonine" evidence="3">
    <location>
        <position position="1265"/>
    </location>
</feature>
<feature type="modified residue" description="Phosphoserine" evidence="3">
    <location>
        <position position="1278"/>
    </location>
</feature>
<feature type="modified residue" description="Phosphothreonine" evidence="3">
    <location>
        <position position="1286"/>
    </location>
</feature>
<feature type="modified residue" description="Phosphoserine" evidence="3">
    <location>
        <position position="1288"/>
    </location>
</feature>
<feature type="modified residue" description="Phosphoserine" evidence="3">
    <location>
        <position position="1292"/>
    </location>
</feature>
<feature type="modified residue" description="Phosphoserine" evidence="3">
    <location>
        <position position="1303"/>
    </location>
</feature>
<feature type="modified residue" description="Phosphoserine" evidence="3">
    <location>
        <position position="1306"/>
    </location>
</feature>
<feature type="modified residue" description="Phosphoserine" evidence="3">
    <location>
        <position position="1413"/>
    </location>
</feature>
<feature type="modified residue" description="Phosphotyrosine" evidence="3">
    <location>
        <position position="1464"/>
    </location>
</feature>
<feature type="modified residue" description="Phosphothreonine" evidence="3">
    <location>
        <position position="1467"/>
    </location>
</feature>
<feature type="modified residue" description="Phosphoserine" evidence="3">
    <location>
        <position position="1474"/>
    </location>
</feature>
<feature type="modified residue" description="Phosphotyrosine" evidence="3">
    <location>
        <position position="1492"/>
    </location>
</feature>
<feature type="modified residue" description="Phosphoserine" evidence="3">
    <location>
        <position position="1495"/>
    </location>
</feature>
<feature type="modified residue" description="Phosphothreonine" evidence="3">
    <location>
        <position position="1501"/>
    </location>
</feature>
<feature type="modified residue" description="Phosphoserine" evidence="3">
    <location>
        <position position="1514"/>
    </location>
</feature>
<feature type="modified residue" description="Phosphothreonine" evidence="3">
    <location>
        <position position="1517"/>
    </location>
</feature>
<feature type="modified residue" description="Phosphoserine" evidence="3">
    <location>
        <position position="1542"/>
    </location>
</feature>
<feature type="modified residue" description="Phosphoserine" evidence="3">
    <location>
        <position position="1547"/>
    </location>
</feature>
<feature type="modified residue" description="Phosphoserine" evidence="3">
    <location>
        <position position="1554"/>
    </location>
</feature>
<feature type="modified residue" description="Phosphoserine" evidence="3">
    <location>
        <position position="1574"/>
    </location>
</feature>
<feature type="modified residue" description="Phosphoserine" evidence="3">
    <location>
        <position position="1600"/>
    </location>
</feature>
<feature type="modified residue" description="Phosphoserine" evidence="3">
    <location>
        <position position="1603"/>
    </location>
</feature>
<feature type="modified residue" description="Phosphoserine" evidence="3">
    <location>
        <position position="1714"/>
    </location>
</feature>
<feature type="modified residue" description="Phosphoserine" evidence="3">
    <location>
        <position position="1726"/>
    </location>
</feature>
<feature type="modified residue" description="Phosphothreonine" evidence="3">
    <location>
        <position position="1730"/>
    </location>
</feature>
<feature type="modified residue" description="Phosphothreonine" evidence="3">
    <location>
        <position position="1736"/>
    </location>
</feature>
<feature type="modified residue" description="Phosphoserine" evidence="3">
    <location>
        <position position="1739"/>
    </location>
</feature>
<feature type="sequence variant" id="VAR_030198" description="In dbSNP:rs12949680.">
    <original>A</original>
    <variation>T</variation>
    <location>
        <position position="594"/>
    </location>
</feature>
<feature type="sequence variant" id="VAR_022110" description="In dbSNP:rs3744558.">
    <original>T</original>
    <variation>M</variation>
    <location>
        <position position="883"/>
    </location>
</feature>
<feature type="sequence variant" id="VAR_030199" description="In dbSNP:rs917361." evidence="8">
    <original>I</original>
    <variation>M</variation>
    <location>
        <position position="1106"/>
    </location>
</feature>
<feature type="sequence variant" id="VAR_030200" description="In dbSNP:rs16943441.">
    <original>A</original>
    <variation>D</variation>
    <location>
        <position position="1117"/>
    </location>
</feature>
<feature type="sequence variant" id="VAR_030201" description="In dbSNP:rs11651295." evidence="8">
    <original>E</original>
    <variation>K</variation>
    <location>
        <position position="1209"/>
    </location>
</feature>
<feature type="sequence variant" id="VAR_030202" description="In dbSNP:rs2277649." evidence="8">
    <original>D</original>
    <variation>G</variation>
    <location>
        <position position="1802"/>
    </location>
</feature>
<feature type="sequence variant" id="VAR_056175" description="In dbSNP:rs34260986.">
    <original>R</original>
    <variation>C</variation>
    <location>
        <position position="1862"/>
    </location>
</feature>
<feature type="sequence variant" id="VAR_024542" description="In dbSNP:rs3744554." evidence="8">
    <original>K</original>
    <variation>E</variation>
    <location>
        <position position="1911"/>
    </location>
</feature>
<feature type="sequence conflict" description="In Ref. 1; AAD29949." evidence="9" ref="1">
    <original>M</original>
    <variation>L</variation>
    <location>
        <position position="1167"/>
    </location>
</feature>
<sequence>MSSDSEMAIFGEAAPFLRKSEKERIEAQNKPFDAKTSVFVVDPKESYVKAIVQSREGGKVTAKTEAGATVTVKEDQVFSMNPPKYDKIEDMAMMTHLHEPAVLYNLKERYAAWMIYTYSGLFCVTVNPYKWLPVYNPEVVTAYRGKKRQEAPPHIFSISDNAYQFMLTDRENQSILITGESGAGKTVNTKRVIQYFATIAVTGEKKKEEPASGKMQGTLEDQIISANPLLEAFGNAKTVRNDNSSRFGKFIRIHFGATGKLASADIETYLLEKSRVTFQLKAERSYHIFYQILSNKKPELIEMLLITTNPYDFAFVSQGEITVPSIDDQEELMATDSAVDILGFTADEKVAIYKLTGAVMHYGNMKFKQKQREEQAEPDGTEVADKAAYLTSLNSADLLKSLCYPRVKVGNEFVTKGQTVQQVYNAVGALAKAIYEKMFLWMVTRINQQLDTKQPRQYFIGVLDIAGFEIFDFNSLEQLCINFTNEKLQQFFNHHMFVLEQEEYKKEGIEWEFIDFGMDLAACIELIEKPMGIFSILEEECMFPKATDTSFKNKLYEQHLGKSNNFQKPKPAKGKPEAHFSLVHYAGTVDYNIAGWLDKNKDPLNETVVGLYQKSAMKTLAFLFSGAQTAEAEGGGGKKGGKKKGSSFQTVSALFRENLNKLMTNLRSTHPHFVRCIIPNETKTPGAMEHELVLHQLRCNGVLEGIRICRKGFPSRILYADFKQRYKVLNASAIPEGQFIDSKKASEKLLGSIEIDHTQYKFGHTKVFFKAGLLGTLEEMRDEKLAQLITRTQAICRGFLMRVEFRKMMERRESIFCIQYNIRAFMNVKHWPWMKLYFKIKPLLKSAETEKEMANMKEEFEKTKEELAKTEAKRKELEEKMVTLMQEKNDLQLQVQAEADALADAEERCDQLIKTKIQLEAKIKEVTERAEDEEEINAELTAKKRKLEDECSELKKDIDDLELTLAKVEKEKHATENKVKNLTEEMAGLDETIAKLTKEKKALQEAHQQTLDDLQMEEDKVNTLTKAKTKLEQQVDDLEGSLEQEKKLCMDLERAKRKLEGDLKLAQESTMDTENDKQQLNEKLKKKEFEMSNLQGKIEDEQALAIQLQKKIKELQARIEELEEEIEAERASRAKAEKQRSDLSRELEEISERLEEAGGATSAQIEMNKKREAEFQKMRRDLEESTLQHEATAAALRKKHADSVAELGEQIDSLQRVKQKLEKEKSELKMEINDLASNMETVSKAKANFEKMCRTLEDQLSEIKTKEEEQQRLINELSAQKARLHTESGEFSRQLDEKDAMVSQLSRGKQAFTQQIEELKRQLEEETKAKSTLAHALQSARHDCDLLREQYEEEQEAKAELQRGMSKANSEVAQWRTKYETDAIQRTEELEEAKKKLAQRLQDAEEHVEAVNSKCASLEKTKQRLQNEVEDLMIDVERSNAACIALDKKQRNFDKVLAEWKQKYEETQAELEASQKESRSLSTELFKVKNAYEESLDHLETLKRENKNLQQEISDLTEQIAEGGKHIHELEKVKKQLDHEKSELQTSLEEAEASLEHEEGKILRIQLELNQVKSEIDRKIAEKDEELDQLKRNHLRVVESMQSTLDAEIRSRNDALRIKKKMEGDLNEMEIQLNHANRQAAEALRNLRNTQGILKDTQLHLDDAIRGQDDLKEQLAMVERRANLMQAEVEELRASLERTERGRKMAEQELLDASERVQLLHTQNTSLINTKKKLETDISQIQGEMEDIVQEARNAEEKAKKAITDAAMMAEELKKEQDTSAHLERMKKNMEQTVKDLQLRLDEAEQLALKGGKKQIQKLEARVRELESEVESEQKHNVEAVKGLRKHERRVKELTYQTEEDRKNILRLQDLVDKLQTKVKAYKRQAEEAEEQSNVNLAKFRKLQHELEEAKERADIAESQVNKLRVKSREVHTKVISEE</sequence>
<gene>
    <name type="primary">MYH4</name>
</gene>
<keyword id="KW-0009">Actin-binding</keyword>
<keyword id="KW-0067">ATP-binding</keyword>
<keyword id="KW-0112">Calmodulin-binding</keyword>
<keyword id="KW-0175">Coiled coil</keyword>
<keyword id="KW-0963">Cytoplasm</keyword>
<keyword id="KW-0488">Methylation</keyword>
<keyword id="KW-0505">Motor protein</keyword>
<keyword id="KW-0514">Muscle protein</keyword>
<keyword id="KW-0518">Myosin</keyword>
<keyword id="KW-0547">Nucleotide-binding</keyword>
<keyword id="KW-0597">Phosphoprotein</keyword>
<keyword id="KW-1267">Proteomics identification</keyword>
<keyword id="KW-1185">Reference proteome</keyword>
<keyword id="KW-0787">Thick filament</keyword>